<protein>
    <recommendedName>
        <fullName>Putative movement protein</fullName>
        <shortName>MP</shortName>
    </recommendedName>
    <alternativeName>
        <fullName>Cell-to-cell transport protein</fullName>
    </alternativeName>
</protein>
<organismHost>
    <name type="scientific">Citrus</name>
    <dbReference type="NCBI Taxonomy" id="2706"/>
</organismHost>
<keyword id="KW-0945">Host-virus interaction</keyword>
<keyword id="KW-1090">Inhibition of host innate immune response by virus</keyword>
<keyword id="KW-1185">Reference proteome</keyword>
<keyword id="KW-0941">Suppressor of RNA silencing</keyword>
<keyword id="KW-0813">Transport</keyword>
<keyword id="KW-0899">Viral immunoevasion</keyword>
<keyword id="KW-0916">Viral movement protein</keyword>
<sequence length="362" mass="40208">MASLINVSSLVNRVKLDQSIIGSDEINKLYGSDAPLVFKDEVKMVIPGNAEGEAIKLQANILTADRLQSIRNAKVNGKEAAYLHLGFVPIAIRSLLPSGNEQIWGRCALVDTSRTRAETAVIDEFEFKFTKKQPFAAKLLTINAAVDINCKVSVGSIQVLLELHGVDLREERSVAAIITGLTCTPTNKMVLLHKIECDTPKWSLCNIIEQVEDEEESKKAFENMFNASSSNLIDLGQEQWLDEGKRTPLIGSLAIKGFGRKVMPVRRRNLTTRNLMKDYVSHVKSETASLKRSQSGRDWGNDRLRKYLEEQALEQARSSTDHQLVKAPKFKTIEVTGLETVHDLKDKIDKAESSTASDTGTK</sequence>
<gene>
    <name type="ORF">ORF2</name>
</gene>
<evidence type="ECO:0000269" key="1">
    <source>
    </source>
</evidence>
<feature type="chain" id="PRO_0000401094" description="Putative movement protein">
    <location>
        <begin position="1"/>
        <end position="362"/>
    </location>
</feature>
<dbReference type="EMBL" id="AJ318061">
    <property type="protein sequence ID" value="CAC39423.1"/>
    <property type="molecule type" value="Genomic_RNA"/>
</dbReference>
<dbReference type="RefSeq" id="NP_624334.1">
    <property type="nucleotide sequence ID" value="NC_003877.1"/>
</dbReference>
<dbReference type="SMR" id="Q91QZ2"/>
<dbReference type="KEGG" id="vg:944479"/>
<dbReference type="Proteomes" id="UP000006933">
    <property type="component" value="Segment"/>
</dbReference>
<dbReference type="GO" id="GO:0052170">
    <property type="term" value="P:symbiont-mediated suppression of host innate immune response"/>
    <property type="evidence" value="ECO:0007669"/>
    <property type="project" value="UniProtKB-KW"/>
</dbReference>
<dbReference type="GO" id="GO:0046740">
    <property type="term" value="P:transport of virus in host, cell to cell"/>
    <property type="evidence" value="ECO:0007669"/>
    <property type="project" value="UniProtKB-KW"/>
</dbReference>
<dbReference type="InterPro" id="IPR028919">
    <property type="entry name" value="Viral_movement"/>
</dbReference>
<dbReference type="Pfam" id="PF01107">
    <property type="entry name" value="MP"/>
    <property type="match status" value="1"/>
</dbReference>
<comment type="function">
    <text evidence="1">Suppressor of viral-induced RNA silencing.</text>
</comment>
<accession>Q91QZ2</accession>
<organism>
    <name type="scientific">Citrus leaf blotch virus (isolate Nagami kumquat/France/SRA-153/1984)</name>
    <name type="common">CLBV</name>
    <dbReference type="NCBI Taxonomy" id="686981"/>
    <lineage>
        <taxon>Viruses</taxon>
        <taxon>Riboviria</taxon>
        <taxon>Orthornavirae</taxon>
        <taxon>Kitrinoviricota</taxon>
        <taxon>Alsuviricetes</taxon>
        <taxon>Tymovirales</taxon>
        <taxon>Betaflexiviridae</taxon>
        <taxon>Trivirinae</taxon>
        <taxon>Citrivirus</taxon>
        <taxon>Citrus leaf blotch virus</taxon>
    </lineage>
</organism>
<reference key="1">
    <citation type="journal article" date="2001" name="Virology">
        <title>The nucleotide sequence and genomic organization of Citrus leaf blotch virus: candidate type species for a new virus genus.</title>
        <authorList>
            <person name="Vives M.C."/>
            <person name="Galipienso L."/>
            <person name="Navarro L."/>
            <person name="Moreno P."/>
            <person name="Guerri J."/>
        </authorList>
    </citation>
    <scope>NUCLEOTIDE SEQUENCE [GENOMIC RNA]</scope>
</reference>
<reference key="2">
    <citation type="journal article" date="2012" name="Virus Genes">
        <title>The Citrus leaf blotch virus movement protein acts as silencing suppressor.</title>
        <authorList>
            <person name="Renovell A."/>
            <person name="Vives M.C."/>
            <person name="Ruiz-Ruiz S."/>
            <person name="Navarro L."/>
            <person name="Moreno P."/>
            <person name="Guerri J."/>
        </authorList>
    </citation>
    <scope>FUNCTION</scope>
</reference>
<proteinExistence type="predicted"/>
<name>MOVP_CLBVS</name>